<reference key="1">
    <citation type="journal article" date="1996" name="Mol. Biol. Evol.">
        <title>Phylogenetic analysis of carbamoylphosphate synthetase genes: complex evolutionary history includes an internal duplication within a gene which can root the tree of life.</title>
        <authorList>
            <person name="Lawson F.S."/>
            <person name="Charlebois R.L."/>
            <person name="Dillon J.A."/>
        </authorList>
    </citation>
    <scope>NUCLEOTIDE SEQUENCE [GENOMIC DNA]</scope>
    <source>
        <strain>ATCC 35092 / DSM 1617 / JCM 11322 / P2</strain>
    </source>
</reference>
<reference key="2">
    <citation type="journal article" date="2000" name="Genome">
        <title>Gene content and organization of a 281-kbp contig from the genome of the extremely thermophilic archaeon, Sulfolobus solfataricus P2.</title>
        <authorList>
            <person name="Charlebois R.L."/>
            <person name="Singh R.K."/>
            <person name="Chan-Weiher C.C.-Y."/>
            <person name="Allard G."/>
            <person name="Chow C."/>
            <person name="Confalonieri F."/>
            <person name="Curtis B."/>
            <person name="Duguet M."/>
            <person name="Erauso G."/>
            <person name="Faguy D."/>
            <person name="Gaasterland T."/>
            <person name="Garrett R.A."/>
            <person name="Gordon P."/>
            <person name="Jeffries A.C."/>
            <person name="Kozera C."/>
            <person name="Kushwaha N."/>
            <person name="Lafleur E."/>
            <person name="Medina N."/>
            <person name="Peng X."/>
            <person name="Penny S.L."/>
            <person name="She Q."/>
            <person name="St Jean A."/>
            <person name="van der Oost J."/>
            <person name="Young F."/>
            <person name="Zivanovic Y."/>
            <person name="Doolittle W.F."/>
            <person name="Ragan M.A."/>
            <person name="Sensen C.W."/>
        </authorList>
    </citation>
    <scope>NUCLEOTIDE SEQUENCE [LARGE SCALE GENOMIC DNA]</scope>
    <source>
        <strain>ATCC 35092 / DSM 1617 / JCM 11322 / P2</strain>
    </source>
</reference>
<reference key="3">
    <citation type="journal article" date="2001" name="Proc. Natl. Acad. Sci. U.S.A.">
        <title>The complete genome of the crenarchaeon Sulfolobus solfataricus P2.</title>
        <authorList>
            <person name="She Q."/>
            <person name="Singh R.K."/>
            <person name="Confalonieri F."/>
            <person name="Zivanovic Y."/>
            <person name="Allard G."/>
            <person name="Awayez M.J."/>
            <person name="Chan-Weiher C.C.-Y."/>
            <person name="Clausen I.G."/>
            <person name="Curtis B.A."/>
            <person name="De Moors A."/>
            <person name="Erauso G."/>
            <person name="Fletcher C."/>
            <person name="Gordon P.M.K."/>
            <person name="Heikamp-de Jong I."/>
            <person name="Jeffries A.C."/>
            <person name="Kozera C.J."/>
            <person name="Medina N."/>
            <person name="Peng X."/>
            <person name="Thi-Ngoc H.P."/>
            <person name="Redder P."/>
            <person name="Schenk M.E."/>
            <person name="Theriault C."/>
            <person name="Tolstrup N."/>
            <person name="Charlebois R.L."/>
            <person name="Doolittle W.F."/>
            <person name="Duguet M."/>
            <person name="Gaasterland T."/>
            <person name="Garrett R.A."/>
            <person name="Ragan M.A."/>
            <person name="Sensen C.W."/>
            <person name="Van der Oost J."/>
        </authorList>
    </citation>
    <scope>NUCLEOTIDE SEQUENCE [LARGE SCALE GENOMIC DNA]</scope>
    <source>
        <strain>ATCC 35092 / DSM 1617 / JCM 11322 / P2</strain>
    </source>
</reference>
<gene>
    <name evidence="1" type="primary">carB</name>
    <name type="ordered locus">SSO0641</name>
</gene>
<protein>
    <recommendedName>
        <fullName evidence="1">Carbamoyl phosphate synthase large chain</fullName>
        <ecNumber evidence="1">6.3.4.16</ecNumber>
        <ecNumber evidence="1">6.3.5.5</ecNumber>
    </recommendedName>
    <alternativeName>
        <fullName evidence="1">Carbamoyl phosphate synthetase ammonia chain</fullName>
    </alternativeName>
</protein>
<proteinExistence type="inferred from homology"/>
<sequence length="1051" mass="118204">MRETPKKVLVIGSGPIKIAEAAEFDYSGSQALKALKEEGIETVLVNSNVATVQTSKKFADKLYMLPVVWWAVEKVIEKERPDGIMIGFGGQTALNVGVDLHKKGVLQKYNVKVLGTQIDGIEKALSREKFRETMIENNLPVPPSLSARSEEEAIKNAKIVGYPVMVRVSFNLGGRGSMVAWTEEDLKKNIRRALSQSYIGEVLLEKYLYHWIELEYEVMRDKKGNSAVIACIENLDPMGVHTGESTVVAPCQTLDNLEYQNMRTYTIEVARSINLIGECNVQFALNPRGYEYYIIETNPRMSRSSALASKATGYPLAYVSAKLALGYELHEVINKVSGRTCACFEPSLDYIVTKIPRWDLSKFENVDQSLATEMMSVGEVMSIGRSFEESLQKAIRMLDIGEPGVVGGKVYESNMSKEEALKYLKERRPYWFLYAAKAFKEGATINEVYEVTGINEFFLNKIKGLVDFYETLRKLKEIDKETLKLAKKLGFSDEQISKALNKSTEYVRKIRYETNTIPVVKLIDTLAGEWPAVTNYMYLTYNGTEDDIEFSQGNKLLIIGAGGFRIGVSVEFDWSVVSLMEAGSKYFDEVAVLNYNPETVSTDWDIARKLYFDEISVERVLDLIKKEKFRYVATFSGGQIGNSIAKELEENGVRLLGTSGSSVDIAENREKFSKLLDKLGISQPDWISATSLGEIKKFANEVGFPVLVRPSYVLSGSSMKIAYSEEELYEYVRRATEISPKYPVVISKYIENAIEAEIDGVSDGNKVLGITLEHIEEAGVHSGDATMSIPFRKLSENNVNRMRENVLNIARELNIKGPFNVQFVVKENTPYIIELNLRASRSMPFSSKAKGINLINESMKAIFDGLDFSEDYYEPPSKYWAVKSAQFSWSQLRGAYPFLGPEMKSTGEAASFGVTFYDALLKSWLSSMPNRIPNKNGIALVYGNKNLDYLKDTADNLTRFGLTVYSISELPLQDIETIDKMKAEELVRAKKVEIIVTDGYLKKFDYNIRRTAVDYNIPIILNGRLGYEVSKAFLNYDSLTFFEISEYGGGI</sequence>
<evidence type="ECO:0000255" key="1">
    <source>
        <dbReference type="HAMAP-Rule" id="MF_01210"/>
    </source>
</evidence>
<name>CARB_SACS2</name>
<dbReference type="EC" id="6.3.4.16" evidence="1"/>
<dbReference type="EC" id="6.3.5.5" evidence="1"/>
<dbReference type="EMBL" id="U33768">
    <property type="protein sequence ID" value="AAA99059.1"/>
    <property type="molecule type" value="Genomic_DNA"/>
</dbReference>
<dbReference type="EMBL" id="Y18930">
    <property type="protein sequence ID" value="CAB57658.1"/>
    <property type="molecule type" value="Genomic_DNA"/>
</dbReference>
<dbReference type="EMBL" id="AE006641">
    <property type="protein sequence ID" value="AAK40949.1"/>
    <property type="molecule type" value="Genomic_DNA"/>
</dbReference>
<dbReference type="PIR" id="T43253">
    <property type="entry name" value="T43253"/>
</dbReference>
<dbReference type="RefSeq" id="WP_009991180.1">
    <property type="nucleotide sequence ID" value="NC_002754.1"/>
</dbReference>
<dbReference type="SMR" id="Q59969"/>
<dbReference type="FunCoup" id="Q59969">
    <property type="interactions" value="331"/>
</dbReference>
<dbReference type="STRING" id="273057.SSO0641"/>
<dbReference type="PaxDb" id="273057-SSO0641"/>
<dbReference type="EnsemblBacteria" id="AAK40949">
    <property type="protein sequence ID" value="AAK40949"/>
    <property type="gene ID" value="SSO0641"/>
</dbReference>
<dbReference type="GeneID" id="44129641"/>
<dbReference type="KEGG" id="sso:SSO0641"/>
<dbReference type="PATRIC" id="fig|273057.12.peg.646"/>
<dbReference type="eggNOG" id="arCOG01594">
    <property type="taxonomic scope" value="Archaea"/>
</dbReference>
<dbReference type="HOGENOM" id="CLU_000513_1_3_2"/>
<dbReference type="InParanoid" id="Q59969"/>
<dbReference type="PhylomeDB" id="Q59969"/>
<dbReference type="UniPathway" id="UPA00068">
    <property type="reaction ID" value="UER00171"/>
</dbReference>
<dbReference type="UniPathway" id="UPA00070">
    <property type="reaction ID" value="UER00115"/>
</dbReference>
<dbReference type="Proteomes" id="UP000001974">
    <property type="component" value="Chromosome"/>
</dbReference>
<dbReference type="GO" id="GO:0005737">
    <property type="term" value="C:cytoplasm"/>
    <property type="evidence" value="ECO:0000318"/>
    <property type="project" value="GO_Central"/>
</dbReference>
<dbReference type="GO" id="GO:0005524">
    <property type="term" value="F:ATP binding"/>
    <property type="evidence" value="ECO:0007669"/>
    <property type="project" value="UniProtKB-UniRule"/>
</dbReference>
<dbReference type="GO" id="GO:0004087">
    <property type="term" value="F:carbamoyl-phosphate synthase (ammonia) activity"/>
    <property type="evidence" value="ECO:0007669"/>
    <property type="project" value="RHEA"/>
</dbReference>
<dbReference type="GO" id="GO:0004088">
    <property type="term" value="F:carbamoyl-phosphate synthase (glutamine-hydrolyzing) activity"/>
    <property type="evidence" value="ECO:0007669"/>
    <property type="project" value="UniProtKB-UniRule"/>
</dbReference>
<dbReference type="GO" id="GO:0046872">
    <property type="term" value="F:metal ion binding"/>
    <property type="evidence" value="ECO:0007669"/>
    <property type="project" value="UniProtKB-KW"/>
</dbReference>
<dbReference type="GO" id="GO:0044205">
    <property type="term" value="P:'de novo' UMP biosynthetic process"/>
    <property type="evidence" value="ECO:0007669"/>
    <property type="project" value="UniProtKB-UniRule"/>
</dbReference>
<dbReference type="GO" id="GO:0006541">
    <property type="term" value="P:glutamine metabolic process"/>
    <property type="evidence" value="ECO:0000318"/>
    <property type="project" value="GO_Central"/>
</dbReference>
<dbReference type="GO" id="GO:0006526">
    <property type="term" value="P:L-arginine biosynthetic process"/>
    <property type="evidence" value="ECO:0007669"/>
    <property type="project" value="UniProtKB-UniRule"/>
</dbReference>
<dbReference type="FunFam" id="1.10.1030.10:FF:000002">
    <property type="entry name" value="Carbamoyl-phosphate synthase large chain"/>
    <property type="match status" value="1"/>
</dbReference>
<dbReference type="FunFam" id="3.30.1490.20:FF:000001">
    <property type="entry name" value="Carbamoyl-phosphate synthase large chain"/>
    <property type="match status" value="1"/>
</dbReference>
<dbReference type="FunFam" id="3.30.470.20:FF:000001">
    <property type="entry name" value="Carbamoyl-phosphate synthase large chain"/>
    <property type="match status" value="1"/>
</dbReference>
<dbReference type="FunFam" id="3.30.470.20:FF:000026">
    <property type="entry name" value="Carbamoyl-phosphate synthase large chain"/>
    <property type="match status" value="1"/>
</dbReference>
<dbReference type="FunFam" id="3.40.50.20:FF:000001">
    <property type="entry name" value="Carbamoyl-phosphate synthase large chain"/>
    <property type="match status" value="2"/>
</dbReference>
<dbReference type="Gene3D" id="3.40.50.20">
    <property type="match status" value="2"/>
</dbReference>
<dbReference type="Gene3D" id="3.30.1490.20">
    <property type="entry name" value="ATP-grasp fold, A domain"/>
    <property type="match status" value="1"/>
</dbReference>
<dbReference type="Gene3D" id="3.30.470.20">
    <property type="entry name" value="ATP-grasp fold, B domain"/>
    <property type="match status" value="2"/>
</dbReference>
<dbReference type="Gene3D" id="1.10.1030.10">
    <property type="entry name" value="Carbamoyl-phosphate synthetase, large subunit oligomerisation domain"/>
    <property type="match status" value="1"/>
</dbReference>
<dbReference type="HAMAP" id="MF_01210_A">
    <property type="entry name" value="CPSase_L_chain_A"/>
    <property type="match status" value="1"/>
</dbReference>
<dbReference type="InterPro" id="IPR011761">
    <property type="entry name" value="ATP-grasp"/>
</dbReference>
<dbReference type="InterPro" id="IPR013815">
    <property type="entry name" value="ATP_grasp_subdomain_1"/>
</dbReference>
<dbReference type="InterPro" id="IPR006275">
    <property type="entry name" value="CarbamoylP_synth_lsu"/>
</dbReference>
<dbReference type="InterPro" id="IPR005480">
    <property type="entry name" value="CarbamoylP_synth_lsu_oligo"/>
</dbReference>
<dbReference type="InterPro" id="IPR036897">
    <property type="entry name" value="CarbamoylP_synth_lsu_oligo_sf"/>
</dbReference>
<dbReference type="InterPro" id="IPR005479">
    <property type="entry name" value="CbamoylP_synth_lsu-like_ATP-bd"/>
</dbReference>
<dbReference type="InterPro" id="IPR005483">
    <property type="entry name" value="CbamoylP_synth_lsu_CPSase_dom"/>
</dbReference>
<dbReference type="InterPro" id="IPR011607">
    <property type="entry name" value="MGS-like_dom"/>
</dbReference>
<dbReference type="InterPro" id="IPR016185">
    <property type="entry name" value="PreATP-grasp_dom_sf"/>
</dbReference>
<dbReference type="NCBIfam" id="TIGR01369">
    <property type="entry name" value="CPSaseII_lrg"/>
    <property type="match status" value="1"/>
</dbReference>
<dbReference type="NCBIfam" id="NF003671">
    <property type="entry name" value="PRK05294.1"/>
    <property type="match status" value="1"/>
</dbReference>
<dbReference type="NCBIfam" id="NF009455">
    <property type="entry name" value="PRK12815.1"/>
    <property type="match status" value="1"/>
</dbReference>
<dbReference type="PANTHER" id="PTHR11405:SF53">
    <property type="entry name" value="CARBAMOYL-PHOSPHATE SYNTHASE [AMMONIA], MITOCHONDRIAL"/>
    <property type="match status" value="1"/>
</dbReference>
<dbReference type="PANTHER" id="PTHR11405">
    <property type="entry name" value="CARBAMOYLTRANSFERASE FAMILY MEMBER"/>
    <property type="match status" value="1"/>
</dbReference>
<dbReference type="Pfam" id="PF02786">
    <property type="entry name" value="CPSase_L_D2"/>
    <property type="match status" value="2"/>
</dbReference>
<dbReference type="Pfam" id="PF02787">
    <property type="entry name" value="CPSase_L_D3"/>
    <property type="match status" value="1"/>
</dbReference>
<dbReference type="PRINTS" id="PR00098">
    <property type="entry name" value="CPSASE"/>
</dbReference>
<dbReference type="SMART" id="SM01096">
    <property type="entry name" value="CPSase_L_D3"/>
    <property type="match status" value="1"/>
</dbReference>
<dbReference type="SUPFAM" id="SSF48108">
    <property type="entry name" value="Carbamoyl phosphate synthetase, large subunit connection domain"/>
    <property type="match status" value="1"/>
</dbReference>
<dbReference type="SUPFAM" id="SSF56059">
    <property type="entry name" value="Glutathione synthetase ATP-binding domain-like"/>
    <property type="match status" value="2"/>
</dbReference>
<dbReference type="SUPFAM" id="SSF52440">
    <property type="entry name" value="PreATP-grasp domain"/>
    <property type="match status" value="2"/>
</dbReference>
<dbReference type="PROSITE" id="PS50975">
    <property type="entry name" value="ATP_GRASP"/>
    <property type="match status" value="2"/>
</dbReference>
<dbReference type="PROSITE" id="PS00867">
    <property type="entry name" value="CPSASE_2"/>
    <property type="match status" value="1"/>
</dbReference>
<dbReference type="PROSITE" id="PS51855">
    <property type="entry name" value="MGS"/>
    <property type="match status" value="1"/>
</dbReference>
<organism>
    <name type="scientific">Saccharolobus solfataricus (strain ATCC 35092 / DSM 1617 / JCM 11322 / P2)</name>
    <name type="common">Sulfolobus solfataricus</name>
    <dbReference type="NCBI Taxonomy" id="273057"/>
    <lineage>
        <taxon>Archaea</taxon>
        <taxon>Thermoproteota</taxon>
        <taxon>Thermoprotei</taxon>
        <taxon>Sulfolobales</taxon>
        <taxon>Sulfolobaceae</taxon>
        <taxon>Saccharolobus</taxon>
    </lineage>
</organism>
<accession>Q59969</accession>
<comment type="function">
    <text evidence="1">Large subunit of the glutamine-dependent carbamoyl phosphate synthetase (CPSase). CPSase catalyzes the formation of carbamoyl phosphate from the ammonia moiety of glutamine, carbonate, and phosphate donated by ATP, constituting the first step of 2 biosynthetic pathways, one leading to arginine and/or urea and the other to pyrimidine nucleotides. The large subunit (synthetase) binds the substrates ammonia (free or transferred from glutamine from the small subunit), hydrogencarbonate and ATP and carries out an ATP-coupled ligase reaction, activating hydrogencarbonate by forming carboxy phosphate which reacts with ammonia to form carbamoyl phosphate.</text>
</comment>
<comment type="catalytic activity">
    <reaction evidence="1">
        <text>hydrogencarbonate + L-glutamine + 2 ATP + H2O = carbamoyl phosphate + L-glutamate + 2 ADP + phosphate + 2 H(+)</text>
        <dbReference type="Rhea" id="RHEA:18633"/>
        <dbReference type="ChEBI" id="CHEBI:15377"/>
        <dbReference type="ChEBI" id="CHEBI:15378"/>
        <dbReference type="ChEBI" id="CHEBI:17544"/>
        <dbReference type="ChEBI" id="CHEBI:29985"/>
        <dbReference type="ChEBI" id="CHEBI:30616"/>
        <dbReference type="ChEBI" id="CHEBI:43474"/>
        <dbReference type="ChEBI" id="CHEBI:58228"/>
        <dbReference type="ChEBI" id="CHEBI:58359"/>
        <dbReference type="ChEBI" id="CHEBI:456216"/>
        <dbReference type="EC" id="6.3.5.5"/>
    </reaction>
</comment>
<comment type="catalytic activity">
    <molecule>Carbamoyl phosphate synthase large chain</molecule>
    <reaction evidence="1">
        <text>hydrogencarbonate + NH4(+) + 2 ATP = carbamoyl phosphate + 2 ADP + phosphate + 2 H(+)</text>
        <dbReference type="Rhea" id="RHEA:18029"/>
        <dbReference type="ChEBI" id="CHEBI:15378"/>
        <dbReference type="ChEBI" id="CHEBI:17544"/>
        <dbReference type="ChEBI" id="CHEBI:28938"/>
        <dbReference type="ChEBI" id="CHEBI:30616"/>
        <dbReference type="ChEBI" id="CHEBI:43474"/>
        <dbReference type="ChEBI" id="CHEBI:58228"/>
        <dbReference type="ChEBI" id="CHEBI:456216"/>
        <dbReference type="EC" id="6.3.4.16"/>
    </reaction>
</comment>
<comment type="cofactor">
    <cofactor evidence="1">
        <name>Mg(2+)</name>
        <dbReference type="ChEBI" id="CHEBI:18420"/>
    </cofactor>
    <cofactor evidence="1">
        <name>Mn(2+)</name>
        <dbReference type="ChEBI" id="CHEBI:29035"/>
    </cofactor>
    <text evidence="1">Binds 4 Mg(2+) or Mn(2+) ions per subunit.</text>
</comment>
<comment type="pathway">
    <text evidence="1">Amino-acid biosynthesis; L-arginine biosynthesis; carbamoyl phosphate from bicarbonate: step 1/1.</text>
</comment>
<comment type="pathway">
    <text evidence="1">Pyrimidine metabolism; UMP biosynthesis via de novo pathway; (S)-dihydroorotate from bicarbonate: step 1/3.</text>
</comment>
<comment type="subunit">
    <text evidence="1">Composed of two chains; the small (or glutamine) chain promotes the hydrolysis of glutamine to ammonia, which is used by the large (or ammonia) chain to synthesize carbamoyl phosphate. Tetramer of heterodimers (alpha,beta)4.</text>
</comment>
<comment type="domain">
    <text evidence="1">The large subunit is composed of 2 ATP-grasp domains that are involved in binding the 2 ATP molecules needed for carbamoyl phosphate synthesis. The N-terminal ATP-grasp domain (referred to as the carboxyphosphate synthetic component) catalyzes the ATP-dependent phosphorylation of hydrogencarbonate to carboxyphosphate and the subsequent nucleophilic attack by ammonia to form a carbamate intermediate. The C-terminal ATP-grasp domain (referred to as the carbamoyl phosphate synthetic component) then catalyzes the phosphorylation of carbamate with the second ATP to form the end product carbamoyl phosphate. The reactive and unstable enzyme intermediates are sequentially channeled from one active site to the next through the interior of the protein over a distance of at least 96 A.</text>
</comment>
<comment type="similarity">
    <text evidence="1">Belongs to the CarB family.</text>
</comment>
<keyword id="KW-0028">Amino-acid biosynthesis</keyword>
<keyword id="KW-0055">Arginine biosynthesis</keyword>
<keyword id="KW-0067">ATP-binding</keyword>
<keyword id="KW-0436">Ligase</keyword>
<keyword id="KW-0460">Magnesium</keyword>
<keyword id="KW-0464">Manganese</keyword>
<keyword id="KW-0479">Metal-binding</keyword>
<keyword id="KW-0547">Nucleotide-binding</keyword>
<keyword id="KW-0665">Pyrimidine biosynthesis</keyword>
<keyword id="KW-1185">Reference proteome</keyword>
<keyword id="KW-0677">Repeat</keyword>
<feature type="chain" id="PRO_0000145084" description="Carbamoyl phosphate synthase large chain">
    <location>
        <begin position="1"/>
        <end position="1051"/>
    </location>
</feature>
<feature type="domain" description="ATP-grasp 1" evidence="1">
    <location>
        <begin position="131"/>
        <end position="325"/>
    </location>
</feature>
<feature type="domain" description="ATP-grasp 2" evidence="1">
    <location>
        <begin position="673"/>
        <end position="863"/>
    </location>
</feature>
<feature type="domain" description="MGS-like" evidence="1">
    <location>
        <begin position="930"/>
        <end position="1051"/>
    </location>
</feature>
<feature type="region of interest" description="Carboxyphosphate synthetic domain" evidence="1">
    <location>
        <begin position="1"/>
        <end position="399"/>
    </location>
</feature>
<feature type="region of interest" description="Oligomerization domain" evidence="1">
    <location>
        <begin position="400"/>
        <end position="548"/>
    </location>
</feature>
<feature type="region of interest" description="Carbamoyl phosphate synthetic domain" evidence="1">
    <location>
        <begin position="549"/>
        <end position="930"/>
    </location>
</feature>
<feature type="region of interest" description="Allosteric domain" evidence="1">
    <location>
        <begin position="931"/>
        <end position="1051"/>
    </location>
</feature>
<feature type="binding site" evidence="1">
    <location>
        <position position="127"/>
    </location>
    <ligand>
        <name>ATP</name>
        <dbReference type="ChEBI" id="CHEBI:30616"/>
        <label>1</label>
    </ligand>
</feature>
<feature type="binding site" evidence="1">
    <location>
        <position position="167"/>
    </location>
    <ligand>
        <name>ATP</name>
        <dbReference type="ChEBI" id="CHEBI:30616"/>
        <label>1</label>
    </ligand>
</feature>
<feature type="binding site" evidence="1">
    <location>
        <position position="173"/>
    </location>
    <ligand>
        <name>ATP</name>
        <dbReference type="ChEBI" id="CHEBI:30616"/>
        <label>1</label>
    </ligand>
</feature>
<feature type="binding site" evidence="1">
    <location>
        <position position="174"/>
    </location>
    <ligand>
        <name>ATP</name>
        <dbReference type="ChEBI" id="CHEBI:30616"/>
        <label>1</label>
    </ligand>
</feature>
<feature type="binding site" evidence="1">
    <location>
        <position position="206"/>
    </location>
    <ligand>
        <name>ATP</name>
        <dbReference type="ChEBI" id="CHEBI:30616"/>
        <label>1</label>
    </ligand>
</feature>
<feature type="binding site" evidence="1">
    <location>
        <position position="208"/>
    </location>
    <ligand>
        <name>ATP</name>
        <dbReference type="ChEBI" id="CHEBI:30616"/>
        <label>1</label>
    </ligand>
</feature>
<feature type="binding site" evidence="1">
    <location>
        <position position="213"/>
    </location>
    <ligand>
        <name>ATP</name>
        <dbReference type="ChEBI" id="CHEBI:30616"/>
        <label>1</label>
    </ligand>
</feature>
<feature type="binding site" evidence="1">
    <location>
        <position position="239"/>
    </location>
    <ligand>
        <name>ATP</name>
        <dbReference type="ChEBI" id="CHEBI:30616"/>
        <label>1</label>
    </ligand>
</feature>
<feature type="binding site" evidence="1">
    <location>
        <position position="240"/>
    </location>
    <ligand>
        <name>ATP</name>
        <dbReference type="ChEBI" id="CHEBI:30616"/>
        <label>1</label>
    </ligand>
</feature>
<feature type="binding site" evidence="1">
    <location>
        <position position="241"/>
    </location>
    <ligand>
        <name>ATP</name>
        <dbReference type="ChEBI" id="CHEBI:30616"/>
        <label>1</label>
    </ligand>
</feature>
<feature type="binding site" evidence="1">
    <location>
        <position position="282"/>
    </location>
    <ligand>
        <name>ATP</name>
        <dbReference type="ChEBI" id="CHEBI:30616"/>
        <label>1</label>
    </ligand>
</feature>
<feature type="binding site" evidence="1">
    <location>
        <position position="282"/>
    </location>
    <ligand>
        <name>Mg(2+)</name>
        <dbReference type="ChEBI" id="CHEBI:18420"/>
        <label>1</label>
    </ligand>
</feature>
<feature type="binding site" evidence="1">
    <location>
        <position position="282"/>
    </location>
    <ligand>
        <name>Mn(2+)</name>
        <dbReference type="ChEBI" id="CHEBI:29035"/>
        <label>1</label>
    </ligand>
</feature>
<feature type="binding site" evidence="1">
    <location>
        <position position="296"/>
    </location>
    <ligand>
        <name>ATP</name>
        <dbReference type="ChEBI" id="CHEBI:30616"/>
        <label>1</label>
    </ligand>
</feature>
<feature type="binding site" evidence="1">
    <location>
        <position position="296"/>
    </location>
    <ligand>
        <name>Mg(2+)</name>
        <dbReference type="ChEBI" id="CHEBI:18420"/>
        <label>1</label>
    </ligand>
</feature>
<feature type="binding site" evidence="1">
    <location>
        <position position="296"/>
    </location>
    <ligand>
        <name>Mg(2+)</name>
        <dbReference type="ChEBI" id="CHEBI:18420"/>
        <label>2</label>
    </ligand>
</feature>
<feature type="binding site" evidence="1">
    <location>
        <position position="296"/>
    </location>
    <ligand>
        <name>Mn(2+)</name>
        <dbReference type="ChEBI" id="CHEBI:29035"/>
        <label>1</label>
    </ligand>
</feature>
<feature type="binding site" evidence="1">
    <location>
        <position position="296"/>
    </location>
    <ligand>
        <name>Mn(2+)</name>
        <dbReference type="ChEBI" id="CHEBI:29035"/>
        <label>2</label>
    </ligand>
</feature>
<feature type="binding site" evidence="1">
    <location>
        <position position="298"/>
    </location>
    <ligand>
        <name>Mg(2+)</name>
        <dbReference type="ChEBI" id="CHEBI:18420"/>
        <label>2</label>
    </ligand>
</feature>
<feature type="binding site" evidence="1">
    <location>
        <position position="298"/>
    </location>
    <ligand>
        <name>Mn(2+)</name>
        <dbReference type="ChEBI" id="CHEBI:29035"/>
        <label>2</label>
    </ligand>
</feature>
<feature type="binding site" evidence="1">
    <location>
        <position position="709"/>
    </location>
    <ligand>
        <name>ATP</name>
        <dbReference type="ChEBI" id="CHEBI:30616"/>
        <label>2</label>
    </ligand>
</feature>
<feature type="binding site" evidence="1">
    <location>
        <position position="748"/>
    </location>
    <ligand>
        <name>ATP</name>
        <dbReference type="ChEBI" id="CHEBI:30616"/>
        <label>2</label>
    </ligand>
</feature>
<feature type="binding site" evidence="1">
    <location>
        <position position="750"/>
    </location>
    <ligand>
        <name>ATP</name>
        <dbReference type="ChEBI" id="CHEBI:30616"/>
        <label>2</label>
    </ligand>
</feature>
<feature type="binding site" evidence="1">
    <location>
        <position position="755"/>
    </location>
    <ligand>
        <name>ATP</name>
        <dbReference type="ChEBI" id="CHEBI:30616"/>
        <label>2</label>
    </ligand>
</feature>
<feature type="binding site" evidence="1">
    <location>
        <position position="779"/>
    </location>
    <ligand>
        <name>ATP</name>
        <dbReference type="ChEBI" id="CHEBI:30616"/>
        <label>2</label>
    </ligand>
</feature>
<feature type="binding site" evidence="1">
    <location>
        <position position="780"/>
    </location>
    <ligand>
        <name>ATP</name>
        <dbReference type="ChEBI" id="CHEBI:30616"/>
        <label>2</label>
    </ligand>
</feature>
<feature type="binding site" evidence="1">
    <location>
        <position position="781"/>
    </location>
    <ligand>
        <name>ATP</name>
        <dbReference type="ChEBI" id="CHEBI:30616"/>
        <label>2</label>
    </ligand>
</feature>
<feature type="binding site" evidence="1">
    <location>
        <position position="782"/>
    </location>
    <ligand>
        <name>ATP</name>
        <dbReference type="ChEBI" id="CHEBI:30616"/>
        <label>2</label>
    </ligand>
</feature>
<feature type="binding site" evidence="1">
    <location>
        <position position="822"/>
    </location>
    <ligand>
        <name>ATP</name>
        <dbReference type="ChEBI" id="CHEBI:30616"/>
        <label>2</label>
    </ligand>
</feature>
<feature type="binding site" evidence="1">
    <location>
        <position position="822"/>
    </location>
    <ligand>
        <name>Mg(2+)</name>
        <dbReference type="ChEBI" id="CHEBI:18420"/>
        <label>3</label>
    </ligand>
</feature>
<feature type="binding site" evidence="1">
    <location>
        <position position="822"/>
    </location>
    <ligand>
        <name>Mn(2+)</name>
        <dbReference type="ChEBI" id="CHEBI:29035"/>
        <label>3</label>
    </ligand>
</feature>
<feature type="binding site" evidence="1">
    <location>
        <position position="834"/>
    </location>
    <ligand>
        <name>ATP</name>
        <dbReference type="ChEBI" id="CHEBI:30616"/>
        <label>2</label>
    </ligand>
</feature>
<feature type="binding site" evidence="1">
    <location>
        <position position="834"/>
    </location>
    <ligand>
        <name>Mg(2+)</name>
        <dbReference type="ChEBI" id="CHEBI:18420"/>
        <label>3</label>
    </ligand>
</feature>
<feature type="binding site" evidence="1">
    <location>
        <position position="834"/>
    </location>
    <ligand>
        <name>Mg(2+)</name>
        <dbReference type="ChEBI" id="CHEBI:18420"/>
        <label>4</label>
    </ligand>
</feature>
<feature type="binding site" evidence="1">
    <location>
        <position position="834"/>
    </location>
    <ligand>
        <name>Mn(2+)</name>
        <dbReference type="ChEBI" id="CHEBI:29035"/>
        <label>3</label>
    </ligand>
</feature>
<feature type="binding site" evidence="1">
    <location>
        <position position="834"/>
    </location>
    <ligand>
        <name>Mn(2+)</name>
        <dbReference type="ChEBI" id="CHEBI:29035"/>
        <label>4</label>
    </ligand>
</feature>
<feature type="binding site" evidence="1">
    <location>
        <position position="836"/>
    </location>
    <ligand>
        <name>Mg(2+)</name>
        <dbReference type="ChEBI" id="CHEBI:18420"/>
        <label>4</label>
    </ligand>
</feature>
<feature type="binding site" evidence="1">
    <location>
        <position position="836"/>
    </location>
    <ligand>
        <name>Mn(2+)</name>
        <dbReference type="ChEBI" id="CHEBI:29035"/>
        <label>4</label>
    </ligand>
</feature>